<keyword id="KW-0119">Carbohydrate metabolism</keyword>
<keyword id="KW-1015">Disulfide bond</keyword>
<keyword id="KW-0325">Glycoprotein</keyword>
<keyword id="KW-0326">Glycosidase</keyword>
<keyword id="KW-0378">Hydrolase</keyword>
<keyword id="KW-0624">Polysaccharide degradation</keyword>
<keyword id="KW-0964">Secreted</keyword>
<keyword id="KW-0732">Signal</keyword>
<gene>
    <name type="primary">lacB</name>
    <name type="ORF">AFUB_016080</name>
</gene>
<dbReference type="EC" id="3.2.1.23"/>
<dbReference type="EMBL" id="DS499594">
    <property type="protein sequence ID" value="EDP56886.1"/>
    <property type="molecule type" value="Genomic_DNA"/>
</dbReference>
<dbReference type="SMR" id="B0XNY2"/>
<dbReference type="GlyCosmos" id="B0XNY2">
    <property type="glycosylation" value="12 sites, No reported glycans"/>
</dbReference>
<dbReference type="EnsemblFungi" id="EDP56886">
    <property type="protein sequence ID" value="EDP56886"/>
    <property type="gene ID" value="AFUB_016080"/>
</dbReference>
<dbReference type="VEuPathDB" id="FungiDB:AFUB_016080"/>
<dbReference type="HOGENOM" id="CLU_005732_2_1_1"/>
<dbReference type="OrthoDB" id="43963at5052"/>
<dbReference type="PhylomeDB" id="B0XNY2"/>
<dbReference type="Proteomes" id="UP000001699">
    <property type="component" value="Unassembled WGS sequence"/>
</dbReference>
<dbReference type="GO" id="GO:0005576">
    <property type="term" value="C:extracellular region"/>
    <property type="evidence" value="ECO:0007669"/>
    <property type="project" value="UniProtKB-SubCell"/>
</dbReference>
<dbReference type="GO" id="GO:0004565">
    <property type="term" value="F:beta-galactosidase activity"/>
    <property type="evidence" value="ECO:0007669"/>
    <property type="project" value="UniProtKB-EC"/>
</dbReference>
<dbReference type="GO" id="GO:0000272">
    <property type="term" value="P:polysaccharide catabolic process"/>
    <property type="evidence" value="ECO:0007669"/>
    <property type="project" value="UniProtKB-KW"/>
</dbReference>
<dbReference type="FunFam" id="2.102.20.10:FF:000001">
    <property type="entry name" value="Beta-galactosidase A"/>
    <property type="match status" value="1"/>
</dbReference>
<dbReference type="FunFam" id="2.60.390.10:FF:000001">
    <property type="entry name" value="Beta-galactosidase A"/>
    <property type="match status" value="1"/>
</dbReference>
<dbReference type="FunFam" id="3.20.20.80:FF:000040">
    <property type="entry name" value="Beta-galactosidase A"/>
    <property type="match status" value="1"/>
</dbReference>
<dbReference type="FunFam" id="2.60.120.260:FF:000138">
    <property type="entry name" value="Probable beta-galactosidase B"/>
    <property type="match status" value="1"/>
</dbReference>
<dbReference type="Gene3D" id="2.102.20.10">
    <property type="entry name" value="Beta-galactosidase, domain 2"/>
    <property type="match status" value="1"/>
</dbReference>
<dbReference type="Gene3D" id="2.60.390.10">
    <property type="entry name" value="Beta-galactosidase, domain 3"/>
    <property type="match status" value="1"/>
</dbReference>
<dbReference type="Gene3D" id="2.60.120.260">
    <property type="entry name" value="Galactose-binding domain-like"/>
    <property type="match status" value="2"/>
</dbReference>
<dbReference type="Gene3D" id="3.20.20.80">
    <property type="entry name" value="Glycosidases"/>
    <property type="match status" value="1"/>
</dbReference>
<dbReference type="InterPro" id="IPR018954">
    <property type="entry name" value="Betagal_dom2"/>
</dbReference>
<dbReference type="InterPro" id="IPR037110">
    <property type="entry name" value="Betagal_dom2_sf"/>
</dbReference>
<dbReference type="InterPro" id="IPR025972">
    <property type="entry name" value="BetaGal_dom3"/>
</dbReference>
<dbReference type="InterPro" id="IPR036833">
    <property type="entry name" value="BetaGal_dom3_sf"/>
</dbReference>
<dbReference type="InterPro" id="IPR025300">
    <property type="entry name" value="BetaGal_jelly_roll_dom"/>
</dbReference>
<dbReference type="InterPro" id="IPR008979">
    <property type="entry name" value="Galactose-bd-like_sf"/>
</dbReference>
<dbReference type="InterPro" id="IPR031330">
    <property type="entry name" value="Gly_Hdrlase_35_cat"/>
</dbReference>
<dbReference type="InterPro" id="IPR001944">
    <property type="entry name" value="Glycoside_Hdrlase_35"/>
</dbReference>
<dbReference type="InterPro" id="IPR017853">
    <property type="entry name" value="Glycoside_hydrolase_SF"/>
</dbReference>
<dbReference type="PANTHER" id="PTHR23421">
    <property type="entry name" value="BETA-GALACTOSIDASE RELATED"/>
    <property type="match status" value="1"/>
</dbReference>
<dbReference type="Pfam" id="PF13364">
    <property type="entry name" value="BetaGal_ABD2"/>
    <property type="match status" value="2"/>
</dbReference>
<dbReference type="Pfam" id="PF10435">
    <property type="entry name" value="BetaGal_dom2"/>
    <property type="match status" value="1"/>
</dbReference>
<dbReference type="Pfam" id="PF13363">
    <property type="entry name" value="BetaGal_dom3"/>
    <property type="match status" value="1"/>
</dbReference>
<dbReference type="Pfam" id="PF01301">
    <property type="entry name" value="Glyco_hydro_35"/>
    <property type="match status" value="1"/>
</dbReference>
<dbReference type="PRINTS" id="PR00742">
    <property type="entry name" value="GLHYDRLASE35"/>
</dbReference>
<dbReference type="SMART" id="SM01029">
    <property type="entry name" value="BetaGal_dom2"/>
    <property type="match status" value="1"/>
</dbReference>
<dbReference type="SUPFAM" id="SSF51445">
    <property type="entry name" value="(Trans)glycosidases"/>
    <property type="match status" value="1"/>
</dbReference>
<dbReference type="SUPFAM" id="SSF117100">
    <property type="entry name" value="Beta-galactosidase LacA, domain 3"/>
    <property type="match status" value="1"/>
</dbReference>
<dbReference type="SUPFAM" id="SSF49785">
    <property type="entry name" value="Galactose-binding domain-like"/>
    <property type="match status" value="2"/>
</dbReference>
<dbReference type="SUPFAM" id="SSF51011">
    <property type="entry name" value="Glycosyl hydrolase domain"/>
    <property type="match status" value="1"/>
</dbReference>
<evidence type="ECO:0000250" key="1"/>
<evidence type="ECO:0000255" key="2"/>
<evidence type="ECO:0000305" key="3"/>
<accession>B0XNY2</accession>
<protein>
    <recommendedName>
        <fullName>Probable beta-galactosidase B</fullName>
        <ecNumber>3.2.1.23</ecNumber>
    </recommendedName>
    <alternativeName>
        <fullName>Lactase B</fullName>
    </alternativeName>
</protein>
<name>BGALB_ASPFC</name>
<feature type="signal peptide" evidence="2">
    <location>
        <begin position="1"/>
        <end position="20"/>
    </location>
</feature>
<feature type="chain" id="PRO_0000395223" description="Probable beta-galactosidase B">
    <location>
        <begin position="21"/>
        <end position="1015"/>
    </location>
</feature>
<feature type="active site" description="Proton donor" evidence="2">
    <location>
        <position position="196"/>
    </location>
</feature>
<feature type="active site" description="Nucleophile" evidence="2">
    <location>
        <position position="308"/>
    </location>
</feature>
<feature type="binding site" evidence="1">
    <location>
        <position position="90"/>
    </location>
    <ligand>
        <name>substrate</name>
    </ligand>
</feature>
<feature type="binding site" evidence="1">
    <location>
        <position position="135"/>
    </location>
    <ligand>
        <name>substrate</name>
    </ligand>
</feature>
<feature type="binding site" evidence="1">
    <location>
        <position position="136"/>
    </location>
    <ligand>
        <name>substrate</name>
    </ligand>
</feature>
<feature type="binding site" evidence="1">
    <location>
        <position position="137"/>
    </location>
    <ligand>
        <name>substrate</name>
    </ligand>
</feature>
<feature type="binding site" evidence="1">
    <location>
        <position position="195"/>
    </location>
    <ligand>
        <name>substrate</name>
    </ligand>
</feature>
<feature type="binding site" evidence="1">
    <location>
        <position position="265"/>
    </location>
    <ligand>
        <name>substrate</name>
    </ligand>
</feature>
<feature type="binding site" evidence="1">
    <location>
        <position position="373"/>
    </location>
    <ligand>
        <name>substrate</name>
    </ligand>
</feature>
<feature type="glycosylation site" description="N-linked (GlcNAc...) asparagine" evidence="2">
    <location>
        <position position="23"/>
    </location>
</feature>
<feature type="glycosylation site" description="N-linked (GlcNAc...) asparagine" evidence="2">
    <location>
        <position position="99"/>
    </location>
</feature>
<feature type="glycosylation site" description="N-linked (GlcNAc...) asparagine" evidence="2">
    <location>
        <position position="100"/>
    </location>
</feature>
<feature type="glycosylation site" description="N-linked (GlcNAc...) asparagine" evidence="2">
    <location>
        <position position="172"/>
    </location>
</feature>
<feature type="glycosylation site" description="N-linked (GlcNAc...) asparagine" evidence="2">
    <location>
        <position position="211"/>
    </location>
</feature>
<feature type="glycosylation site" description="N-linked (GlcNAc...) asparagine" evidence="2">
    <location>
        <position position="411"/>
    </location>
</feature>
<feature type="glycosylation site" description="N-linked (GlcNAc...) asparagine" evidence="2">
    <location>
        <position position="456"/>
    </location>
</feature>
<feature type="glycosylation site" description="N-linked (GlcNAc...) asparagine" evidence="2">
    <location>
        <position position="554"/>
    </location>
</feature>
<feature type="glycosylation site" description="N-linked (GlcNAc...) asparagine" evidence="2">
    <location>
        <position position="679"/>
    </location>
</feature>
<feature type="glycosylation site" description="N-linked (GlcNAc...) asparagine" evidence="2">
    <location>
        <position position="735"/>
    </location>
</feature>
<feature type="glycosylation site" description="N-linked (GlcNAc...) asparagine" evidence="2">
    <location>
        <position position="775"/>
    </location>
</feature>
<feature type="glycosylation site" description="N-linked (GlcNAc...) asparagine" evidence="2">
    <location>
        <position position="821"/>
    </location>
</feature>
<feature type="disulfide bond" evidence="1">
    <location>
        <begin position="271"/>
        <end position="324"/>
    </location>
</feature>
<sequence length="1015" mass="111681">MAHIYRLLLLLLSNLWFSTAAQNQSETEWPLHDNGLSKVVQWDHYSFQVNGQRIFIFSGEFHYWRIPVPELWRDILEKVKATGFTAFAFYSSWAYHAPNNSTVDFSTGARDITPIFELAKELGMYMIVRPGPYVNAEASAGGFPLWLMTGEYGSLRNDDPRYTAAWTPYFANMSQITSKYQVTDGHNTLVYQIENEYGQQWIGDPKNRNPNKTAVAYMELLEASARENGITVPLTSNDPNMNSKSWGSDWSNAGGNVDVAGLDSYPSCWTCDVSQCTSTNGEYVPYKVIDYYDYFQEVQPTLPSFMPEFQGGSYNPWAGPEGGCPQDTSAEFANLFYRWNIGQRVTAMSLYMLYGGTNWGAIAAPVTATSYDYSAPISEDRSIGAKYSETKLLALFTRTAKDLTMTEAIGNGTQYTTNTAVRAFELRNPQTNAGFYVTFHTDTTVGGNQAFKLHVNTSVGALTVPKNEGLIQLNGHQSKIIVTDFTLGKRTLLYSTAEVLTYAVFENRPTLVLWVPTGESGEFAIKGAKSGKVENGDGCSGIKFKREKDYLVVNFSQAKGLSVLRLDNGVRVVLLDKAAAYRFWAPALTDDPNVQETETVLVHGPYLVRSASISKTTLALRGDSVEKTTLEIFAPHSVRKITWNGKEVQTSHTPYGSLKATLAAPPDIKLPALTSWRSNDSLPERLPSYDDSGPAWIEANHMTTSNPSPPATFPVLYADEYGFHNGVRLWRGYFNGSASGVFLNIQGGSAFGWSAWLNGHFLDSHLGTATTSQANKTLTFPSSILNPTENVLLIVHDDTGHDQTTGALNPRGILEARLLSNDTSSPPPEFTHWRLAGTAGGESNLDPIRGVFNEDGLFAERMGWHLPGFDDSAWTSENSATSASSALSFTGATVRFFRSVVPLNIPAGLDVSISFVLSTPTAAPKGYRAQLFVNGYQYGRYNPHIGNQVVFPVPPGILDYQGDNTIGLAVWAQTEEGAGIQVDWKVNYVADSSLSVAGFGKGLRPGWTEERLKFA</sequence>
<proteinExistence type="inferred from homology"/>
<reference key="1">
    <citation type="journal article" date="2008" name="PLoS Genet.">
        <title>Genomic islands in the pathogenic filamentous fungus Aspergillus fumigatus.</title>
        <authorList>
            <person name="Fedorova N.D."/>
            <person name="Khaldi N."/>
            <person name="Joardar V.S."/>
            <person name="Maiti R."/>
            <person name="Amedeo P."/>
            <person name="Anderson M.J."/>
            <person name="Crabtree J."/>
            <person name="Silva J.C."/>
            <person name="Badger J.H."/>
            <person name="Albarraq A."/>
            <person name="Angiuoli S."/>
            <person name="Bussey H."/>
            <person name="Bowyer P."/>
            <person name="Cotty P.J."/>
            <person name="Dyer P.S."/>
            <person name="Egan A."/>
            <person name="Galens K."/>
            <person name="Fraser-Liggett C.M."/>
            <person name="Haas B.J."/>
            <person name="Inman J.M."/>
            <person name="Kent R."/>
            <person name="Lemieux S."/>
            <person name="Malavazi I."/>
            <person name="Orvis J."/>
            <person name="Roemer T."/>
            <person name="Ronning C.M."/>
            <person name="Sundaram J.P."/>
            <person name="Sutton G."/>
            <person name="Turner G."/>
            <person name="Venter J.C."/>
            <person name="White O.R."/>
            <person name="Whitty B.R."/>
            <person name="Youngman P."/>
            <person name="Wolfe K.H."/>
            <person name="Goldman G.H."/>
            <person name="Wortman J.R."/>
            <person name="Jiang B."/>
            <person name="Denning D.W."/>
            <person name="Nierman W.C."/>
        </authorList>
    </citation>
    <scope>NUCLEOTIDE SEQUENCE [LARGE SCALE GENOMIC DNA]</scope>
    <source>
        <strain>CBS 144.89 / FGSC A1163 / CEA10</strain>
    </source>
</reference>
<comment type="function">
    <text evidence="1">Cleaves beta-linked terminal galactosyl residues from gangliosides, glycoproteins, and glycosaminoglycans.</text>
</comment>
<comment type="catalytic activity">
    <reaction>
        <text>Hydrolysis of terminal non-reducing beta-D-galactose residues in beta-D-galactosides.</text>
        <dbReference type="EC" id="3.2.1.23"/>
    </reaction>
</comment>
<comment type="subcellular location">
    <subcellularLocation>
        <location evidence="1">Secreted</location>
    </subcellularLocation>
</comment>
<comment type="similarity">
    <text evidence="3">Belongs to the glycosyl hydrolase 35 family.</text>
</comment>
<organism>
    <name type="scientific">Aspergillus fumigatus (strain CBS 144.89 / FGSC A1163 / CEA10)</name>
    <name type="common">Neosartorya fumigata</name>
    <dbReference type="NCBI Taxonomy" id="451804"/>
    <lineage>
        <taxon>Eukaryota</taxon>
        <taxon>Fungi</taxon>
        <taxon>Dikarya</taxon>
        <taxon>Ascomycota</taxon>
        <taxon>Pezizomycotina</taxon>
        <taxon>Eurotiomycetes</taxon>
        <taxon>Eurotiomycetidae</taxon>
        <taxon>Eurotiales</taxon>
        <taxon>Aspergillaceae</taxon>
        <taxon>Aspergillus</taxon>
        <taxon>Aspergillus subgen. Fumigati</taxon>
    </lineage>
</organism>